<dbReference type="EMBL" id="AL157959">
    <property type="protein sequence ID" value="CAM08674.1"/>
    <property type="status" value="ALT_INIT"/>
    <property type="molecule type" value="Genomic_DNA"/>
</dbReference>
<dbReference type="PIR" id="C81844">
    <property type="entry name" value="C81844"/>
</dbReference>
<dbReference type="RefSeq" id="WP_002245997.1">
    <property type="nucleotide sequence ID" value="NC_003116.1"/>
</dbReference>
<dbReference type="SMR" id="Q9JU31"/>
<dbReference type="EnsemblBacteria" id="CAM08674">
    <property type="protein sequence ID" value="CAM08674"/>
    <property type="gene ID" value="NMA1527"/>
</dbReference>
<dbReference type="KEGG" id="nma:NMA1527"/>
<dbReference type="HOGENOM" id="CLU_001981_9_7_4"/>
<dbReference type="Proteomes" id="UP000000626">
    <property type="component" value="Chromosome"/>
</dbReference>
<dbReference type="GO" id="GO:0005886">
    <property type="term" value="C:plasma membrane"/>
    <property type="evidence" value="ECO:0007669"/>
    <property type="project" value="UniProtKB-SubCell"/>
</dbReference>
<dbReference type="GO" id="GO:0005524">
    <property type="term" value="F:ATP binding"/>
    <property type="evidence" value="ECO:0007669"/>
    <property type="project" value="UniProtKB-KW"/>
</dbReference>
<dbReference type="GO" id="GO:0003677">
    <property type="term" value="F:DNA binding"/>
    <property type="evidence" value="ECO:0007669"/>
    <property type="project" value="UniProtKB-KW"/>
</dbReference>
<dbReference type="GO" id="GO:0051301">
    <property type="term" value="P:cell division"/>
    <property type="evidence" value="ECO:0007669"/>
    <property type="project" value="UniProtKB-KW"/>
</dbReference>
<dbReference type="GO" id="GO:0007059">
    <property type="term" value="P:chromosome segregation"/>
    <property type="evidence" value="ECO:0007669"/>
    <property type="project" value="UniProtKB-KW"/>
</dbReference>
<dbReference type="CDD" id="cd01127">
    <property type="entry name" value="TrwB_TraG_TraD_VirD4"/>
    <property type="match status" value="1"/>
</dbReference>
<dbReference type="FunFam" id="3.40.50.300:FF:000209">
    <property type="entry name" value="Cell division protein FtsK"/>
    <property type="match status" value="1"/>
</dbReference>
<dbReference type="Gene3D" id="3.30.980.40">
    <property type="match status" value="1"/>
</dbReference>
<dbReference type="Gene3D" id="3.40.50.300">
    <property type="entry name" value="P-loop containing nucleotide triphosphate hydrolases"/>
    <property type="match status" value="1"/>
</dbReference>
<dbReference type="Gene3D" id="1.10.10.10">
    <property type="entry name" value="Winged helix-like DNA-binding domain superfamily/Winged helix DNA-binding domain"/>
    <property type="match status" value="1"/>
</dbReference>
<dbReference type="InterPro" id="IPR050206">
    <property type="entry name" value="FtsK/SpoIIIE/SftA"/>
</dbReference>
<dbReference type="InterPro" id="IPR025199">
    <property type="entry name" value="FtsK_4TM"/>
</dbReference>
<dbReference type="InterPro" id="IPR041027">
    <property type="entry name" value="FtsK_alpha"/>
</dbReference>
<dbReference type="InterPro" id="IPR002543">
    <property type="entry name" value="FtsK_dom"/>
</dbReference>
<dbReference type="InterPro" id="IPR018541">
    <property type="entry name" value="Ftsk_gamma"/>
</dbReference>
<dbReference type="InterPro" id="IPR027417">
    <property type="entry name" value="P-loop_NTPase"/>
</dbReference>
<dbReference type="InterPro" id="IPR036388">
    <property type="entry name" value="WH-like_DNA-bd_sf"/>
</dbReference>
<dbReference type="InterPro" id="IPR036390">
    <property type="entry name" value="WH_DNA-bd_sf"/>
</dbReference>
<dbReference type="PANTHER" id="PTHR22683:SF41">
    <property type="entry name" value="DNA TRANSLOCASE FTSK"/>
    <property type="match status" value="1"/>
</dbReference>
<dbReference type="PANTHER" id="PTHR22683">
    <property type="entry name" value="SPORULATION PROTEIN RELATED"/>
    <property type="match status" value="1"/>
</dbReference>
<dbReference type="Pfam" id="PF13491">
    <property type="entry name" value="FtsK_4TM"/>
    <property type="match status" value="1"/>
</dbReference>
<dbReference type="Pfam" id="PF17854">
    <property type="entry name" value="FtsK_alpha"/>
    <property type="match status" value="1"/>
</dbReference>
<dbReference type="Pfam" id="PF09397">
    <property type="entry name" value="FtsK_gamma"/>
    <property type="match status" value="1"/>
</dbReference>
<dbReference type="Pfam" id="PF01580">
    <property type="entry name" value="FtsK_SpoIIIE"/>
    <property type="match status" value="1"/>
</dbReference>
<dbReference type="SMART" id="SM00843">
    <property type="entry name" value="Ftsk_gamma"/>
    <property type="match status" value="1"/>
</dbReference>
<dbReference type="SUPFAM" id="SSF52540">
    <property type="entry name" value="P-loop containing nucleoside triphosphate hydrolases"/>
    <property type="match status" value="1"/>
</dbReference>
<dbReference type="SUPFAM" id="SSF46785">
    <property type="entry name" value="Winged helix' DNA-binding domain"/>
    <property type="match status" value="1"/>
</dbReference>
<dbReference type="PROSITE" id="PS50901">
    <property type="entry name" value="FTSK"/>
    <property type="match status" value="1"/>
</dbReference>
<accession>Q9JU31</accession>
<accession>A1ISB8</accession>
<organism>
    <name type="scientific">Neisseria meningitidis serogroup A / serotype 4A (strain DSM 15465 / Z2491)</name>
    <dbReference type="NCBI Taxonomy" id="122587"/>
    <lineage>
        <taxon>Bacteria</taxon>
        <taxon>Pseudomonadati</taxon>
        <taxon>Pseudomonadota</taxon>
        <taxon>Betaproteobacteria</taxon>
        <taxon>Neisseriales</taxon>
        <taxon>Neisseriaceae</taxon>
        <taxon>Neisseria</taxon>
    </lineage>
</organism>
<reference key="1">
    <citation type="journal article" date="2000" name="Nature">
        <title>Complete DNA sequence of a serogroup A strain of Neisseria meningitidis Z2491.</title>
        <authorList>
            <person name="Parkhill J."/>
            <person name="Achtman M."/>
            <person name="James K.D."/>
            <person name="Bentley S.D."/>
            <person name="Churcher C.M."/>
            <person name="Klee S.R."/>
            <person name="Morelli G."/>
            <person name="Basham D."/>
            <person name="Brown D."/>
            <person name="Chillingworth T."/>
            <person name="Davies R.M."/>
            <person name="Davis P."/>
            <person name="Devlin K."/>
            <person name="Feltwell T."/>
            <person name="Hamlin N."/>
            <person name="Holroyd S."/>
            <person name="Jagels K."/>
            <person name="Leather S."/>
            <person name="Moule S."/>
            <person name="Mungall K.L."/>
            <person name="Quail M.A."/>
            <person name="Rajandream M.A."/>
            <person name="Rutherford K.M."/>
            <person name="Simmonds M."/>
            <person name="Skelton J."/>
            <person name="Whitehead S."/>
            <person name="Spratt B.G."/>
            <person name="Barrell B.G."/>
        </authorList>
    </citation>
    <scope>NUCLEOTIDE SEQUENCE [LARGE SCALE GENOMIC DNA]</scope>
    <source>
        <strain>DSM 15465 / Z2491</strain>
    </source>
</reference>
<protein>
    <recommendedName>
        <fullName>DNA translocase FtsK 1</fullName>
    </recommendedName>
</protein>
<gene>
    <name type="primary">ftsK1</name>
    <name type="ordered locus">NMA1527</name>
</gene>
<sequence length="812" mass="87996">MTEKSHKKTAKGRAGSPSPTSARNKKADNGARGNKVSERLKAVKELQKTETKKARPEHVVNLIGDALWLMGLAATLYLVISLISFDMGDPSWSHSSPVVEDVANWGGLFGAYVADVGYYLFGWSFWWWIAAACVMLYKNFRLHAKQTENEAYNHKIAAAALFVLTVFSPVLEYFVLGGKYADSLPVGAGGMVGIRVGAVFAWLLGKSGSLLIILVVLLLSLSLLVQISWLEFLNGAGRAVQNRLSALSGKVMALGKRRPNTKTDGVDTQNTRRMVKEAKNITAKPVALPEGSSSNRKSVAVSVAPPPKIQVSLFEDDEPRQAGEYHKPTLNLLRIPDSEPVSINPAELERTAELIESKLAEFGIGVQVVSATSGPVITRYEIEPAQGVKGSQIVALSKDLARSMSLQSVRIVETIAGKNTMGIELPNDKRQDVMLSEILSSPVFAEAKSKLTVALGKDIAGTPVVGDLAKMPHLLVAGMTGSGKSVGVNGMIMSMLFKATPDEVRFIMIDPKMLELSIYDGIPHLLCPVVTDMREAGQALNWCVAEMEKRYRLLSHAGVRNLEGFNQKVEAAKAAGKPLLNPFSLNPDNPEPLEKLPMIVVVIDELADLMMTERKAVEQQIARLAQKARAAGIHMIVATQRPSVDVVTGLIKANIPTRMAFTVQSKIDSRTILDQMGADELLKYGDSLFLQPGSAEPTRLQGAFVSDDEVHHVVAFVKEQAPANYVEGLLTGEAAQETANIVSPNADSDELFDQAVAYVLESKKTSISSLQRQLRIGYNRAANLMEALENAGVVSPSDLNGSRKILAHKDHL</sequence>
<proteinExistence type="inferred from homology"/>
<keyword id="KW-0067">ATP-binding</keyword>
<keyword id="KW-0131">Cell cycle</keyword>
<keyword id="KW-0132">Cell division</keyword>
<keyword id="KW-0997">Cell inner membrane</keyword>
<keyword id="KW-1003">Cell membrane</keyword>
<keyword id="KW-0159">Chromosome partition</keyword>
<keyword id="KW-0238">DNA-binding</keyword>
<keyword id="KW-0472">Membrane</keyword>
<keyword id="KW-0547">Nucleotide-binding</keyword>
<keyword id="KW-0812">Transmembrane</keyword>
<keyword id="KW-1133">Transmembrane helix</keyword>
<feature type="chain" id="PRO_0000098272" description="DNA translocase FtsK 1">
    <location>
        <begin position="1"/>
        <end position="812"/>
    </location>
</feature>
<feature type="transmembrane region" description="Helical" evidence="2">
    <location>
        <begin position="63"/>
        <end position="83"/>
    </location>
</feature>
<feature type="transmembrane region" description="Helical" evidence="2">
    <location>
        <begin position="116"/>
        <end position="136"/>
    </location>
</feature>
<feature type="transmembrane region" description="Helical" evidence="2">
    <location>
        <begin position="156"/>
        <end position="176"/>
    </location>
</feature>
<feature type="transmembrane region" description="Helical" evidence="2">
    <location>
        <begin position="184"/>
        <end position="204"/>
    </location>
</feature>
<feature type="transmembrane region" description="Helical" evidence="2">
    <location>
        <begin position="210"/>
        <end position="230"/>
    </location>
</feature>
<feature type="topological domain" description="Cytoplasmic" evidence="2">
    <location>
        <begin position="231"/>
        <end position="812"/>
    </location>
</feature>
<feature type="domain" description="FtsK" evidence="3">
    <location>
        <begin position="461"/>
        <end position="670"/>
    </location>
</feature>
<feature type="region of interest" description="Disordered" evidence="4">
    <location>
        <begin position="1"/>
        <end position="36"/>
    </location>
</feature>
<feature type="compositionally biased region" description="Basic residues" evidence="4">
    <location>
        <begin position="1"/>
        <end position="11"/>
    </location>
</feature>
<feature type="compositionally biased region" description="Basic and acidic residues" evidence="4">
    <location>
        <begin position="25"/>
        <end position="36"/>
    </location>
</feature>
<feature type="binding site" evidence="3">
    <location>
        <begin position="481"/>
        <end position="486"/>
    </location>
    <ligand>
        <name>ATP</name>
        <dbReference type="ChEBI" id="CHEBI:30616"/>
    </ligand>
</feature>
<name>FTSK1_NEIMA</name>
<evidence type="ECO:0000250" key="1"/>
<evidence type="ECO:0000255" key="2"/>
<evidence type="ECO:0000255" key="3">
    <source>
        <dbReference type="PROSITE-ProRule" id="PRU00289"/>
    </source>
</evidence>
<evidence type="ECO:0000256" key="4">
    <source>
        <dbReference type="SAM" id="MobiDB-lite"/>
    </source>
</evidence>
<evidence type="ECO:0000305" key="5"/>
<comment type="function">
    <text evidence="1">Essential cell division protein that coordinates cell division and chromosome segregation. The N-terminus is involved in assembly of the cell-division machinery. The C-terminus functions as a DNA motor that moves dsDNA in an ATP-dependent manner towards the dif recombination site, which is located within the replication terminus region. Translocation stops specifically at Xer-dif sites, where FtsK interacts with the Xer recombinase, allowing activation of chromosome unlinking by recombination. FtsK orienting polar sequences (KOPS) guide the direction of DNA translocation. FtsK can remove proteins from DNA as it translocates, but translocation stops specifically at XerCD-dif site, thereby preventing removal of XerC and XerD from dif (By similarity).</text>
</comment>
<comment type="subunit">
    <text evidence="1">Homohexamer. Forms a ring that surrounds DNA (By similarity).</text>
</comment>
<comment type="subcellular location">
    <subcellularLocation>
        <location evidence="1">Cell inner membrane</location>
        <topology evidence="1">Multi-pass membrane protein</topology>
    </subcellularLocation>
    <text evidence="1">Located at the septum.</text>
</comment>
<comment type="domain">
    <text evidence="1">Consists of an N-terminal domain, which is sufficient for the localization to the septal ring and is required for cell division, followed by a linker domain, and a C-terminal domain, which forms the translocation motor involved in chromosome segregation. The C-terminal domain can be further subdivided into alpha, beta and gamma subdomains. The alpha and beta subdomains multimerise to produce a hexameric ring, contain the nucleotide binding motif and form the DNA pump. The gamma subdomain is a regulatory subdomain that controls translocation of DNA by recognition of KOPS motifs and interacts with XerD recombinase (By similarity).</text>
</comment>
<comment type="similarity">
    <text evidence="5">Belongs to the FtsK/SpoIIIE/SftA family.</text>
</comment>
<comment type="sequence caution" evidence="5">
    <conflict type="erroneous initiation">
        <sequence resource="EMBL-CDS" id="CAM08674"/>
    </conflict>
    <text>Truncated N-terminus.</text>
</comment>